<dbReference type="EMBL" id="CP000227">
    <property type="protein sequence ID" value="ACM11642.1"/>
    <property type="molecule type" value="Genomic_DNA"/>
</dbReference>
<dbReference type="SMR" id="B9ITG0"/>
<dbReference type="KEGG" id="bcq:BCQ_1212"/>
<dbReference type="HOGENOM" id="CLU_146641_1_1_9"/>
<dbReference type="Proteomes" id="UP000000441">
    <property type="component" value="Chromosome"/>
</dbReference>
<dbReference type="GO" id="GO:0005886">
    <property type="term" value="C:plasma membrane"/>
    <property type="evidence" value="ECO:0007669"/>
    <property type="project" value="UniProtKB-SubCell"/>
</dbReference>
<dbReference type="HAMAP" id="MF_01536">
    <property type="entry name" value="UPF0344"/>
    <property type="match status" value="1"/>
</dbReference>
<dbReference type="InterPro" id="IPR010899">
    <property type="entry name" value="UPF0344"/>
</dbReference>
<dbReference type="NCBIfam" id="NF010194">
    <property type="entry name" value="PRK13673.1-1"/>
    <property type="match status" value="1"/>
</dbReference>
<dbReference type="Pfam" id="PF07457">
    <property type="entry name" value="DUF1516"/>
    <property type="match status" value="1"/>
</dbReference>
<reference key="1">
    <citation type="journal article" date="2009" name="J. Bacteriol.">
        <title>Complete genome sequence of the extremophilic Bacillus cereus strain Q1 with industrial applications.</title>
        <authorList>
            <person name="Xiong Z."/>
            <person name="Jiang Y."/>
            <person name="Qi D."/>
            <person name="Lu H."/>
            <person name="Yang F."/>
            <person name="Yang J."/>
            <person name="Chen L."/>
            <person name="Sun L."/>
            <person name="Xu X."/>
            <person name="Xue Y."/>
            <person name="Zhu Y."/>
            <person name="Jin Q."/>
        </authorList>
    </citation>
    <scope>NUCLEOTIDE SEQUENCE [LARGE SCALE GENOMIC DNA]</scope>
    <source>
        <strain>Q1</strain>
    </source>
</reference>
<organism>
    <name type="scientific">Bacillus cereus (strain Q1)</name>
    <dbReference type="NCBI Taxonomy" id="361100"/>
    <lineage>
        <taxon>Bacteria</taxon>
        <taxon>Bacillati</taxon>
        <taxon>Bacillota</taxon>
        <taxon>Bacilli</taxon>
        <taxon>Bacillales</taxon>
        <taxon>Bacillaceae</taxon>
        <taxon>Bacillus</taxon>
        <taxon>Bacillus cereus group</taxon>
    </lineage>
</organism>
<sequence>MVHMHITAWALGLILFFVAYSLYSAGRKGKGVHMGLRLMYIIIIVTGVWLYLDQTIVDKSYHMWYGLKMLAGILVIAGMEMVLVKMSKNKATGAFWGLFIIALVAVFYLGLKLPIGWQVF</sequence>
<evidence type="ECO:0000255" key="1">
    <source>
        <dbReference type="HAMAP-Rule" id="MF_01536"/>
    </source>
</evidence>
<comment type="subcellular location">
    <subcellularLocation>
        <location evidence="1">Cell membrane</location>
        <topology evidence="1">Multi-pass membrane protein</topology>
    </subcellularLocation>
</comment>
<comment type="similarity">
    <text evidence="1">Belongs to the UPF0344 family.</text>
</comment>
<protein>
    <recommendedName>
        <fullName evidence="1">UPF0344 protein BCQ_1212</fullName>
    </recommendedName>
</protein>
<keyword id="KW-1003">Cell membrane</keyword>
<keyword id="KW-0472">Membrane</keyword>
<keyword id="KW-0812">Transmembrane</keyword>
<keyword id="KW-1133">Transmembrane helix</keyword>
<name>Y1212_BACCQ</name>
<accession>B9ITG0</accession>
<proteinExistence type="inferred from homology"/>
<gene>
    <name type="ordered locus">BCQ_1212</name>
</gene>
<feature type="chain" id="PRO_1000185189" description="UPF0344 protein BCQ_1212">
    <location>
        <begin position="1"/>
        <end position="120"/>
    </location>
</feature>
<feature type="transmembrane region" description="Helical" evidence="1">
    <location>
        <begin position="6"/>
        <end position="26"/>
    </location>
</feature>
<feature type="transmembrane region" description="Helical" evidence="1">
    <location>
        <begin position="32"/>
        <end position="52"/>
    </location>
</feature>
<feature type="transmembrane region" description="Helical" evidence="1">
    <location>
        <begin position="64"/>
        <end position="84"/>
    </location>
</feature>
<feature type="transmembrane region" description="Helical" evidence="1">
    <location>
        <begin position="91"/>
        <end position="111"/>
    </location>
</feature>